<organism>
    <name type="scientific">Salmonella typhimurium (strain LT2 / SGSC1412 / ATCC 700720)</name>
    <dbReference type="NCBI Taxonomy" id="99287"/>
    <lineage>
        <taxon>Bacteria</taxon>
        <taxon>Pseudomonadati</taxon>
        <taxon>Pseudomonadota</taxon>
        <taxon>Gammaproteobacteria</taxon>
        <taxon>Enterobacterales</taxon>
        <taxon>Enterobacteriaceae</taxon>
        <taxon>Salmonella</taxon>
    </lineage>
</organism>
<accession>P0A2N8</accession>
<accession>P37130</accession>
<reference key="1">
    <citation type="journal article" date="1994" name="J. Bacteriol.">
        <title>Cloning, DNA sequence, and complementation analysis of the Salmonella typhimurium hemN gene encoding a putative oxygen-independent coproporphyrinogen III oxidase.</title>
        <authorList>
            <person name="Xu K."/>
            <person name="Elliott T."/>
        </authorList>
    </citation>
    <scope>NUCLEOTIDE SEQUENCE [GENOMIC DNA]</scope>
    <source>
        <strain>LT2</strain>
    </source>
</reference>
<reference key="2">
    <citation type="journal article" date="2001" name="Nature">
        <title>Complete genome sequence of Salmonella enterica serovar Typhimurium LT2.</title>
        <authorList>
            <person name="McClelland M."/>
            <person name="Sanderson K.E."/>
            <person name="Spieth J."/>
            <person name="Clifton S.W."/>
            <person name="Latreille P."/>
            <person name="Courtney L."/>
            <person name="Porwollik S."/>
            <person name="Ali J."/>
            <person name="Dante M."/>
            <person name="Du F."/>
            <person name="Hou S."/>
            <person name="Layman D."/>
            <person name="Leonard S."/>
            <person name="Nguyen C."/>
            <person name="Scott K."/>
            <person name="Holmes A."/>
            <person name="Grewal N."/>
            <person name="Mulvaney E."/>
            <person name="Ryan E."/>
            <person name="Sun H."/>
            <person name="Florea L."/>
            <person name="Miller W."/>
            <person name="Stoneking T."/>
            <person name="Nhan M."/>
            <person name="Waterston R."/>
            <person name="Wilson R.K."/>
        </authorList>
    </citation>
    <scope>NUCLEOTIDE SEQUENCE [LARGE SCALE GENOMIC DNA]</scope>
    <source>
        <strain>LT2 / SGSC1412 / ATCC 700720</strain>
    </source>
</reference>
<gene>
    <name evidence="1" type="primary">yihI</name>
    <name type="ordered locus">STM4003</name>
</gene>
<protein>
    <recommendedName>
        <fullName evidence="1">Der GTPase-activating protein YihI</fullName>
    </recommendedName>
</protein>
<sequence>MKKPTSAPRSKAFGKQRRKTREELNQEARDRKRLKKHRGHAPGSRAAGGNSASGGGNQNQQKDPRIGSKTPVPLGVTEKVTQQHKPKSEKPMLSPQAELDLLETDERLDALLERLEAGETLSAEDQAWVDAKLDRIDELMQKLGLSYDDDEEDDEEDEKQEDMMRLLRGGN</sequence>
<dbReference type="EMBL" id="U06779">
    <property type="protein sequence ID" value="AAA19691.1"/>
    <property type="molecule type" value="Genomic_DNA"/>
</dbReference>
<dbReference type="EMBL" id="AE006468">
    <property type="protein sequence ID" value="AAL22842.1"/>
    <property type="molecule type" value="Genomic_DNA"/>
</dbReference>
<dbReference type="RefSeq" id="NP_462883.1">
    <property type="nucleotide sequence ID" value="NC_003197.2"/>
</dbReference>
<dbReference type="RefSeq" id="WP_000743292.1">
    <property type="nucleotide sequence ID" value="NC_003197.2"/>
</dbReference>
<dbReference type="SMR" id="P0A2N8"/>
<dbReference type="STRING" id="99287.STM4003"/>
<dbReference type="PaxDb" id="99287-STM4003"/>
<dbReference type="GeneID" id="1255529"/>
<dbReference type="KEGG" id="stm:STM4003"/>
<dbReference type="PATRIC" id="fig|99287.12.peg.4217"/>
<dbReference type="HOGENOM" id="CLU_094104_2_0_6"/>
<dbReference type="OMA" id="ENNECLN"/>
<dbReference type="PhylomeDB" id="P0A2N8"/>
<dbReference type="BioCyc" id="SENT99287:STM4003-MONOMER"/>
<dbReference type="Proteomes" id="UP000001014">
    <property type="component" value="Chromosome"/>
</dbReference>
<dbReference type="GO" id="GO:0005096">
    <property type="term" value="F:GTPase activator activity"/>
    <property type="evidence" value="ECO:0007669"/>
    <property type="project" value="UniProtKB-KW"/>
</dbReference>
<dbReference type="GO" id="GO:0042254">
    <property type="term" value="P:ribosome biogenesis"/>
    <property type="evidence" value="ECO:0007669"/>
    <property type="project" value="UniProtKB-KW"/>
</dbReference>
<dbReference type="HAMAP" id="MF_01058">
    <property type="entry name" value="GAP_YihI"/>
    <property type="match status" value="1"/>
</dbReference>
<dbReference type="InterPro" id="IPR007336">
    <property type="entry name" value="YihI"/>
</dbReference>
<dbReference type="NCBIfam" id="NF003560">
    <property type="entry name" value="PRK05244.1-1"/>
    <property type="match status" value="1"/>
</dbReference>
<dbReference type="Pfam" id="PF04220">
    <property type="entry name" value="YihI"/>
    <property type="match status" value="1"/>
</dbReference>
<name>YIHI_SALTY</name>
<proteinExistence type="inferred from homology"/>
<comment type="function">
    <text evidence="1">A GTPase-activating protein (GAP) that modifies Der/EngA GTPase function. May play a role in ribosome biogenesis.</text>
</comment>
<comment type="subunit">
    <text evidence="1">Interacts with Der.</text>
</comment>
<comment type="similarity">
    <text evidence="1">Belongs to the YihI family.</text>
</comment>
<evidence type="ECO:0000255" key="1">
    <source>
        <dbReference type="HAMAP-Rule" id="MF_01058"/>
    </source>
</evidence>
<evidence type="ECO:0000256" key="2">
    <source>
        <dbReference type="SAM" id="MobiDB-lite"/>
    </source>
</evidence>
<feature type="chain" id="PRO_0000209592" description="Der GTPase-activating protein YihI">
    <location>
        <begin position="1"/>
        <end position="171"/>
    </location>
</feature>
<feature type="region of interest" description="Disordered" evidence="2">
    <location>
        <begin position="1"/>
        <end position="99"/>
    </location>
</feature>
<feature type="region of interest" description="Disordered" evidence="2">
    <location>
        <begin position="145"/>
        <end position="171"/>
    </location>
</feature>
<feature type="compositionally biased region" description="Basic and acidic residues" evidence="2">
    <location>
        <begin position="20"/>
        <end position="30"/>
    </location>
</feature>
<feature type="compositionally biased region" description="Basic residues" evidence="2">
    <location>
        <begin position="31"/>
        <end position="40"/>
    </location>
</feature>
<feature type="compositionally biased region" description="Acidic residues" evidence="2">
    <location>
        <begin position="147"/>
        <end position="160"/>
    </location>
</feature>
<keyword id="KW-0343">GTPase activation</keyword>
<keyword id="KW-1185">Reference proteome</keyword>
<keyword id="KW-0690">Ribosome biogenesis</keyword>